<gene>
    <name evidence="1" type="primary">stf3</name>
    <name type="ordered locus">MT2329</name>
</gene>
<comment type="function">
    <text evidence="1">Involved in the biosynthesis of sulfomenaquinone (SMK, initially named S881 on the basis of its mass), which is localized in the outer envelope of M.tuberculosis and negatively regulates its virulence. Catalyzes the transfer of a sulfonate group from 3'-phosphoadenosine-5'-phosphosulfate (PAPS) to omega-hydroxy-beta-dihydromenaquinone-9, generating omega-sulfo-beta-dihydromenaquinone-9 (sulfomenaquinone).</text>
</comment>
<comment type="catalytic activity">
    <reaction evidence="1">
        <text>omega-hydroxy-beta-dihydromenaquinone-9 + 3'-phosphoadenylyl sulfate = omega-sulfo-beta-dihydromenaquinone-9 + adenosine 3',5'-bisphosphate + H(+)</text>
        <dbReference type="Rhea" id="RHEA:58892"/>
        <dbReference type="ChEBI" id="CHEBI:15378"/>
        <dbReference type="ChEBI" id="CHEBI:58339"/>
        <dbReference type="ChEBI" id="CHEBI:58343"/>
        <dbReference type="ChEBI" id="CHEBI:140189"/>
        <dbReference type="ChEBI" id="CHEBI:142861"/>
        <dbReference type="EC" id="2.8.2.40"/>
    </reaction>
    <physiologicalReaction direction="left-to-right" evidence="1">
        <dbReference type="Rhea" id="RHEA:58893"/>
    </physiologicalReaction>
</comment>
<comment type="similarity">
    <text evidence="2">Belongs to the Stf3 family.</text>
</comment>
<protein>
    <recommendedName>
        <fullName evidence="1">Omega-hydroxy-beta-dihydromenaquinone-9 sulfotransferase Stf3</fullName>
        <ecNumber evidence="1">2.8.2.40</ecNumber>
    </recommendedName>
    <alternativeName>
        <fullName evidence="1">PAPS-dependent sulfotransferase Stf3</fullName>
    </alternativeName>
</protein>
<sequence length="388" mass="46062">MKALRSSSRLSRWREWAAPLWVGCNFSAWMRLLIRNRFAVHHSRWHFAVLYTFLSMVNSCLGLWQKIVFGRRVAETVIADPPIFIVGHWRTGTTLLHELLVVDDRHTGPTGYECLAPHHFLLTEWFAPYVEFLVSKHRAMDNMDLSLHHPQEDEFVWCMQGLPSPYLTIAFPNRPPQYEEYLDLEQVAPRELEIWKRTLFRFVQQVYFRRRKTVILKNPTHSFRIKVLLEVFPQAKFIHIVRDPYVVYPSTIHLHKALYRIHGLQQPTFDGLDDKVVSTYVDLYRKLDEGRELVDPTRFYELRYEDLIGDPEGQLRRLYQHLGLGDFECYLPRLRQYLADHADYKTNSYQLTVEQRAIVDEHWGEIIDRYGYDRHTPEPARLRPAVGG</sequence>
<feature type="chain" id="PRO_0000427485" description="Omega-hydroxy-beta-dihydromenaquinone-9 sulfotransferase Stf3">
    <location>
        <begin position="1"/>
        <end position="388"/>
    </location>
</feature>
<reference key="1">
    <citation type="journal article" date="2002" name="J. Bacteriol.">
        <title>Whole-genome comparison of Mycobacterium tuberculosis clinical and laboratory strains.</title>
        <authorList>
            <person name="Fleischmann R.D."/>
            <person name="Alland D."/>
            <person name="Eisen J.A."/>
            <person name="Carpenter L."/>
            <person name="White O."/>
            <person name="Peterson J.D."/>
            <person name="DeBoy R.T."/>
            <person name="Dodson R.J."/>
            <person name="Gwinn M.L."/>
            <person name="Haft D.H."/>
            <person name="Hickey E.K."/>
            <person name="Kolonay J.F."/>
            <person name="Nelson W.C."/>
            <person name="Umayam L.A."/>
            <person name="Ermolaeva M.D."/>
            <person name="Salzberg S.L."/>
            <person name="Delcher A."/>
            <person name="Utterback T.R."/>
            <person name="Weidman J.F."/>
            <person name="Khouri H.M."/>
            <person name="Gill J."/>
            <person name="Mikula A."/>
            <person name="Bishai W."/>
            <person name="Jacobs W.R. Jr."/>
            <person name="Venter J.C."/>
            <person name="Fraser C.M."/>
        </authorList>
    </citation>
    <scope>NUCLEOTIDE SEQUENCE [LARGE SCALE GENOMIC DNA]</scope>
    <source>
        <strain>CDC 1551 / Oshkosh</strain>
    </source>
</reference>
<organism>
    <name type="scientific">Mycobacterium tuberculosis (strain CDC 1551 / Oshkosh)</name>
    <dbReference type="NCBI Taxonomy" id="83331"/>
    <lineage>
        <taxon>Bacteria</taxon>
        <taxon>Bacillati</taxon>
        <taxon>Actinomycetota</taxon>
        <taxon>Actinomycetes</taxon>
        <taxon>Mycobacteriales</taxon>
        <taxon>Mycobacteriaceae</taxon>
        <taxon>Mycobacterium</taxon>
        <taxon>Mycobacterium tuberculosis complex</taxon>
    </lineage>
</organism>
<dbReference type="EC" id="2.8.2.40" evidence="1"/>
<dbReference type="EMBL" id="AE000516">
    <property type="protein sequence ID" value="AAK46611.1"/>
    <property type="molecule type" value="Genomic_DNA"/>
</dbReference>
<dbReference type="PIR" id="G70729">
    <property type="entry name" value="G70729"/>
</dbReference>
<dbReference type="RefSeq" id="WP_003411661.1">
    <property type="nucleotide sequence ID" value="NZ_KK341227.1"/>
</dbReference>
<dbReference type="SMR" id="P9WLG0"/>
<dbReference type="KEGG" id="mtc:MT2329"/>
<dbReference type="PATRIC" id="fig|83331.31.peg.2504"/>
<dbReference type="HOGENOM" id="CLU_051167_0_0_11"/>
<dbReference type="Proteomes" id="UP000001020">
    <property type="component" value="Chromosome"/>
</dbReference>
<dbReference type="GO" id="GO:0016740">
    <property type="term" value="F:transferase activity"/>
    <property type="evidence" value="ECO:0007669"/>
    <property type="project" value="UniProtKB-KW"/>
</dbReference>
<dbReference type="FunFam" id="3.40.50.300:FF:002618">
    <property type="entry name" value="PAPS-dependent sulfotransferase Stf3"/>
    <property type="match status" value="1"/>
</dbReference>
<dbReference type="Gene3D" id="3.40.50.300">
    <property type="entry name" value="P-loop containing nucleotide triphosphate hydrolases"/>
    <property type="match status" value="1"/>
</dbReference>
<dbReference type="InterPro" id="IPR027417">
    <property type="entry name" value="P-loop_NTPase"/>
</dbReference>
<dbReference type="InterPro" id="IPR052736">
    <property type="entry name" value="Stf3_sulfotransferase"/>
</dbReference>
<dbReference type="PANTHER" id="PTHR36451:SF1">
    <property type="entry name" value="OMEGA-HYDROXY-BETA-DIHYDROMENAQUINONE-9 SULFOTRANSFERASE STF3"/>
    <property type="match status" value="1"/>
</dbReference>
<dbReference type="PANTHER" id="PTHR36451">
    <property type="entry name" value="PAPS-DEPENDENT SULFOTRANSFERASE STF3"/>
    <property type="match status" value="1"/>
</dbReference>
<dbReference type="Pfam" id="PF13469">
    <property type="entry name" value="Sulfotransfer_3"/>
    <property type="match status" value="1"/>
</dbReference>
<dbReference type="SUPFAM" id="SSF52540">
    <property type="entry name" value="P-loop containing nucleoside triphosphate hydrolases"/>
    <property type="match status" value="1"/>
</dbReference>
<keyword id="KW-1185">Reference proteome</keyword>
<keyword id="KW-0808">Transferase</keyword>
<accession>P9WLG0</accession>
<accession>L0TAP1</accession>
<accession>P64963</accession>
<accession>Q50695</accession>
<evidence type="ECO:0000250" key="1">
    <source>
        <dbReference type="UniProtKB" id="P9WLG1"/>
    </source>
</evidence>
<evidence type="ECO:0000305" key="2"/>
<name>STF3_MYCTO</name>
<proteinExistence type="inferred from homology"/>